<comment type="function">
    <text evidence="1">NAD-binding protein involved in the addition of a carboxymethylaminomethyl (cmnm) group at the wobble position (U34) of certain tRNAs, forming tRNA-cmnm(5)s(2)U34.</text>
</comment>
<comment type="cofactor">
    <cofactor evidence="1">
        <name>FAD</name>
        <dbReference type="ChEBI" id="CHEBI:57692"/>
    </cofactor>
</comment>
<comment type="subunit">
    <text evidence="1">Homodimer. Heterotetramer of two MnmE and two MnmG subunits.</text>
</comment>
<comment type="subcellular location">
    <subcellularLocation>
        <location evidence="1">Cytoplasm</location>
    </subcellularLocation>
</comment>
<comment type="similarity">
    <text evidence="1">Belongs to the MnmG family.</text>
</comment>
<gene>
    <name evidence="1" type="primary">mnmG</name>
    <name evidence="1" type="synonym">gidA</name>
    <name type="ordered locus">PBPRA3615</name>
</gene>
<feature type="chain" id="PRO_0000117147" description="tRNA uridine 5-carboxymethylaminomethyl modification enzyme MnmG">
    <location>
        <begin position="1"/>
        <end position="629"/>
    </location>
</feature>
<feature type="binding site" evidence="1">
    <location>
        <begin position="13"/>
        <end position="18"/>
    </location>
    <ligand>
        <name>FAD</name>
        <dbReference type="ChEBI" id="CHEBI:57692"/>
    </ligand>
</feature>
<feature type="binding site" evidence="1">
    <location>
        <position position="125"/>
    </location>
    <ligand>
        <name>FAD</name>
        <dbReference type="ChEBI" id="CHEBI:57692"/>
    </ligand>
</feature>
<feature type="binding site" evidence="1">
    <location>
        <position position="180"/>
    </location>
    <ligand>
        <name>FAD</name>
        <dbReference type="ChEBI" id="CHEBI:57692"/>
    </ligand>
</feature>
<feature type="binding site" evidence="1">
    <location>
        <begin position="273"/>
        <end position="287"/>
    </location>
    <ligand>
        <name>NAD(+)</name>
        <dbReference type="ChEBI" id="CHEBI:57540"/>
    </ligand>
</feature>
<feature type="binding site" evidence="1">
    <location>
        <position position="370"/>
    </location>
    <ligand>
        <name>FAD</name>
        <dbReference type="ChEBI" id="CHEBI:57692"/>
    </ligand>
</feature>
<evidence type="ECO:0000255" key="1">
    <source>
        <dbReference type="HAMAP-Rule" id="MF_00129"/>
    </source>
</evidence>
<organism>
    <name type="scientific">Photobacterium profundum (strain SS9)</name>
    <dbReference type="NCBI Taxonomy" id="298386"/>
    <lineage>
        <taxon>Bacteria</taxon>
        <taxon>Pseudomonadati</taxon>
        <taxon>Pseudomonadota</taxon>
        <taxon>Gammaproteobacteria</taxon>
        <taxon>Vibrionales</taxon>
        <taxon>Vibrionaceae</taxon>
        <taxon>Photobacterium</taxon>
    </lineage>
</organism>
<sequence length="629" mass="70188">MFYQENFDVIVVGGGHAGTEAALAAARMGQKTLLLTHNIDTLGQMSCNPAIGGIGKGHLVKEVDALGGLMAKATDKGGIQFRTLNSSKGPAVRATRAQADRALYKAAVREVLENQPNLMLFQQAVDDLIVENDRVIGVVTEMGLKFRATSVVLTVGTFLGGKIHIGLENYSGGRAGDPPSIALASRLRELPFRVDRLKTGTPPRIDARTVDFSRLQAQHGDNPIPTFSFMGKTSDHPRQIPCYITYTNEKTHDVIRNNLDRSPMYSGVIEGIGPRYCPSIEDKVMRFADKNSHQIFIEPEGLTTHELYPNGISTSLPFDVQIQIVRSMDGFENAAIMRPGYAIEYDFFDPRDLKQTFETKFIDGLFFAGQINGTTGYEEAAAQGLLAGMNAALQSQGKEGWCPRRDQAYMGVLIDDLSTMGTKEPYRMFTSRAEYRLLLREDNADLRLTEIGREFGLVDDDRWARFNQKVENIEQERQRLKDIWINPNSDHVDEINKILKTPIAREANGEDLLRRPEITYKLLTQLEDFSPAHIDTQASEQVEIQVKYQGYIDRQKDEVEKSLRHETTKLPFDLEYSIVKGLSNEVIAKLTDAKPETIGMASRISGITPAAISLLLVYLKKHGMLKKGE</sequence>
<keyword id="KW-0963">Cytoplasm</keyword>
<keyword id="KW-0274">FAD</keyword>
<keyword id="KW-0285">Flavoprotein</keyword>
<keyword id="KW-0520">NAD</keyword>
<keyword id="KW-1185">Reference proteome</keyword>
<keyword id="KW-0819">tRNA processing</keyword>
<dbReference type="EMBL" id="CR378674">
    <property type="protein sequence ID" value="CAG21871.1"/>
    <property type="molecule type" value="Genomic_DNA"/>
</dbReference>
<dbReference type="RefSeq" id="WP_011220107.1">
    <property type="nucleotide sequence ID" value="NC_006370.1"/>
</dbReference>
<dbReference type="SMR" id="Q6LLF7"/>
<dbReference type="STRING" id="298386.PBPRA3615"/>
<dbReference type="KEGG" id="ppr:PBPRA3615"/>
<dbReference type="eggNOG" id="COG0445">
    <property type="taxonomic scope" value="Bacteria"/>
</dbReference>
<dbReference type="HOGENOM" id="CLU_007831_2_2_6"/>
<dbReference type="Proteomes" id="UP000000593">
    <property type="component" value="Chromosome 1"/>
</dbReference>
<dbReference type="GO" id="GO:0005829">
    <property type="term" value="C:cytosol"/>
    <property type="evidence" value="ECO:0007669"/>
    <property type="project" value="TreeGrafter"/>
</dbReference>
<dbReference type="GO" id="GO:0050660">
    <property type="term" value="F:flavin adenine dinucleotide binding"/>
    <property type="evidence" value="ECO:0007669"/>
    <property type="project" value="UniProtKB-UniRule"/>
</dbReference>
<dbReference type="GO" id="GO:0030488">
    <property type="term" value="P:tRNA methylation"/>
    <property type="evidence" value="ECO:0007669"/>
    <property type="project" value="TreeGrafter"/>
</dbReference>
<dbReference type="GO" id="GO:0002098">
    <property type="term" value="P:tRNA wobble uridine modification"/>
    <property type="evidence" value="ECO:0007669"/>
    <property type="project" value="InterPro"/>
</dbReference>
<dbReference type="FunFam" id="1.10.10.1800:FF:000001">
    <property type="entry name" value="tRNA uridine 5-carboxymethylaminomethyl modification enzyme MnmG"/>
    <property type="match status" value="1"/>
</dbReference>
<dbReference type="FunFam" id="1.10.150.570:FF:000001">
    <property type="entry name" value="tRNA uridine 5-carboxymethylaminomethyl modification enzyme MnmG"/>
    <property type="match status" value="1"/>
</dbReference>
<dbReference type="FunFam" id="3.50.50.60:FF:000002">
    <property type="entry name" value="tRNA uridine 5-carboxymethylaminomethyl modification enzyme MnmG"/>
    <property type="match status" value="1"/>
</dbReference>
<dbReference type="FunFam" id="3.50.50.60:FF:000010">
    <property type="entry name" value="tRNA uridine 5-carboxymethylaminomethyl modification enzyme MnmG"/>
    <property type="match status" value="1"/>
</dbReference>
<dbReference type="Gene3D" id="3.50.50.60">
    <property type="entry name" value="FAD/NAD(P)-binding domain"/>
    <property type="match status" value="2"/>
</dbReference>
<dbReference type="Gene3D" id="1.10.150.570">
    <property type="entry name" value="GidA associated domain, C-terminal subdomain"/>
    <property type="match status" value="1"/>
</dbReference>
<dbReference type="Gene3D" id="1.10.10.1800">
    <property type="entry name" value="tRNA uridine 5-carboxymethylaminomethyl modification enzyme MnmG/GidA"/>
    <property type="match status" value="1"/>
</dbReference>
<dbReference type="HAMAP" id="MF_00129">
    <property type="entry name" value="MnmG_GidA"/>
    <property type="match status" value="1"/>
</dbReference>
<dbReference type="InterPro" id="IPR036188">
    <property type="entry name" value="FAD/NAD-bd_sf"/>
</dbReference>
<dbReference type="InterPro" id="IPR049312">
    <property type="entry name" value="GIDA_C_N"/>
</dbReference>
<dbReference type="InterPro" id="IPR004416">
    <property type="entry name" value="MnmG"/>
</dbReference>
<dbReference type="InterPro" id="IPR002218">
    <property type="entry name" value="MnmG-rel"/>
</dbReference>
<dbReference type="InterPro" id="IPR020595">
    <property type="entry name" value="MnmG-rel_CS"/>
</dbReference>
<dbReference type="InterPro" id="IPR026904">
    <property type="entry name" value="MnmG_C"/>
</dbReference>
<dbReference type="InterPro" id="IPR047001">
    <property type="entry name" value="MnmG_C_subdom"/>
</dbReference>
<dbReference type="InterPro" id="IPR044920">
    <property type="entry name" value="MnmG_C_subdom_sf"/>
</dbReference>
<dbReference type="InterPro" id="IPR040131">
    <property type="entry name" value="MnmG_N"/>
</dbReference>
<dbReference type="NCBIfam" id="TIGR00136">
    <property type="entry name" value="mnmG_gidA"/>
    <property type="match status" value="1"/>
</dbReference>
<dbReference type="PANTHER" id="PTHR11806">
    <property type="entry name" value="GLUCOSE INHIBITED DIVISION PROTEIN A"/>
    <property type="match status" value="1"/>
</dbReference>
<dbReference type="PANTHER" id="PTHR11806:SF0">
    <property type="entry name" value="PROTEIN MTO1 HOMOLOG, MITOCHONDRIAL"/>
    <property type="match status" value="1"/>
</dbReference>
<dbReference type="Pfam" id="PF01134">
    <property type="entry name" value="GIDA"/>
    <property type="match status" value="1"/>
</dbReference>
<dbReference type="Pfam" id="PF21680">
    <property type="entry name" value="GIDA_C_1st"/>
    <property type="match status" value="1"/>
</dbReference>
<dbReference type="Pfam" id="PF13932">
    <property type="entry name" value="SAM_GIDA_C"/>
    <property type="match status" value="1"/>
</dbReference>
<dbReference type="SMART" id="SM01228">
    <property type="entry name" value="GIDA_assoc_3"/>
    <property type="match status" value="1"/>
</dbReference>
<dbReference type="SUPFAM" id="SSF51905">
    <property type="entry name" value="FAD/NAD(P)-binding domain"/>
    <property type="match status" value="1"/>
</dbReference>
<dbReference type="PROSITE" id="PS01280">
    <property type="entry name" value="GIDA_1"/>
    <property type="match status" value="1"/>
</dbReference>
<dbReference type="PROSITE" id="PS01281">
    <property type="entry name" value="GIDA_2"/>
    <property type="match status" value="1"/>
</dbReference>
<accession>Q6LLF7</accession>
<reference key="1">
    <citation type="journal article" date="2005" name="Science">
        <title>Life at depth: Photobacterium profundum genome sequence and expression analysis.</title>
        <authorList>
            <person name="Vezzi A."/>
            <person name="Campanaro S."/>
            <person name="D'Angelo M."/>
            <person name="Simonato F."/>
            <person name="Vitulo N."/>
            <person name="Lauro F.M."/>
            <person name="Cestaro A."/>
            <person name="Malacrida G."/>
            <person name="Simionati B."/>
            <person name="Cannata N."/>
            <person name="Romualdi C."/>
            <person name="Bartlett D.H."/>
            <person name="Valle G."/>
        </authorList>
    </citation>
    <scope>NUCLEOTIDE SEQUENCE [LARGE SCALE GENOMIC DNA]</scope>
    <source>
        <strain>ATCC BAA-1253 / SS9</strain>
    </source>
</reference>
<protein>
    <recommendedName>
        <fullName evidence="1">tRNA uridine 5-carboxymethylaminomethyl modification enzyme MnmG</fullName>
    </recommendedName>
    <alternativeName>
        <fullName evidence="1">Glucose-inhibited division protein A</fullName>
    </alternativeName>
</protein>
<proteinExistence type="inferred from homology"/>
<name>MNMG_PHOPR</name>